<proteinExistence type="inferred from homology"/>
<evidence type="ECO:0000255" key="1">
    <source>
        <dbReference type="HAMAP-Rule" id="MF_01633"/>
    </source>
</evidence>
<feature type="chain" id="PRO_0000246787" description="7-cyano-7-deazaguanine synthase">
    <location>
        <begin position="1"/>
        <end position="229"/>
    </location>
</feature>
<feature type="binding site" evidence="1">
    <location>
        <begin position="15"/>
        <end position="25"/>
    </location>
    <ligand>
        <name>ATP</name>
        <dbReference type="ChEBI" id="CHEBI:30616"/>
    </ligand>
</feature>
<feature type="binding site" evidence="1">
    <location>
        <position position="192"/>
    </location>
    <ligand>
        <name>Zn(2+)</name>
        <dbReference type="ChEBI" id="CHEBI:29105"/>
    </ligand>
</feature>
<feature type="binding site" evidence="1">
    <location>
        <position position="202"/>
    </location>
    <ligand>
        <name>Zn(2+)</name>
        <dbReference type="ChEBI" id="CHEBI:29105"/>
    </ligand>
</feature>
<feature type="binding site" evidence="1">
    <location>
        <position position="205"/>
    </location>
    <ligand>
        <name>Zn(2+)</name>
        <dbReference type="ChEBI" id="CHEBI:29105"/>
    </ligand>
</feature>
<feature type="binding site" evidence="1">
    <location>
        <position position="208"/>
    </location>
    <ligand>
        <name>Zn(2+)</name>
        <dbReference type="ChEBI" id="CHEBI:29105"/>
    </ligand>
</feature>
<keyword id="KW-0067">ATP-binding</keyword>
<keyword id="KW-0436">Ligase</keyword>
<keyword id="KW-0479">Metal-binding</keyword>
<keyword id="KW-0547">Nucleotide-binding</keyword>
<keyword id="KW-0671">Queuosine biosynthesis</keyword>
<keyword id="KW-0862">Zinc</keyword>
<name>QUEC_ACIAD</name>
<sequence>MNGEFGMRPRAIVLLSGGLDSTTCLAWAQARYECMALSFMYGQRSTTELDAAKAIAQNAGVEHRVINIDLANLGGSALTDHNIDVPEQLQEGIPVTYVPARNTIFLSYALAAAEVFGAEAIVIGVNAVDYSGYPDCRPEYIQAFTNMARLATKAGVEGKPLTFETPLLHLSKANIIRLGIEHGVDYSQTVSCYQADAQGRACGKCDSCRLRKQGFIEAGVTDPTRYIPQ</sequence>
<gene>
    <name evidence="1" type="primary">queC</name>
    <name type="ordered locus">ACIAD2601</name>
</gene>
<organism>
    <name type="scientific">Acinetobacter baylyi (strain ATCC 33305 / BD413 / ADP1)</name>
    <dbReference type="NCBI Taxonomy" id="62977"/>
    <lineage>
        <taxon>Bacteria</taxon>
        <taxon>Pseudomonadati</taxon>
        <taxon>Pseudomonadota</taxon>
        <taxon>Gammaproteobacteria</taxon>
        <taxon>Moraxellales</taxon>
        <taxon>Moraxellaceae</taxon>
        <taxon>Acinetobacter</taxon>
    </lineage>
</organism>
<dbReference type="EC" id="6.3.4.20" evidence="1"/>
<dbReference type="EMBL" id="CR543861">
    <property type="protein sequence ID" value="CAG69362.1"/>
    <property type="molecule type" value="Genomic_DNA"/>
</dbReference>
<dbReference type="SMR" id="Q6F9A3"/>
<dbReference type="STRING" id="202950.GCA_001485005_01418"/>
<dbReference type="KEGG" id="aci:ACIAD2601"/>
<dbReference type="eggNOG" id="COG0603">
    <property type="taxonomic scope" value="Bacteria"/>
</dbReference>
<dbReference type="HOGENOM" id="CLU_081854_1_0_6"/>
<dbReference type="UniPathway" id="UPA00391"/>
<dbReference type="Proteomes" id="UP000000430">
    <property type="component" value="Chromosome"/>
</dbReference>
<dbReference type="GO" id="GO:0005524">
    <property type="term" value="F:ATP binding"/>
    <property type="evidence" value="ECO:0007669"/>
    <property type="project" value="UniProtKB-UniRule"/>
</dbReference>
<dbReference type="GO" id="GO:0016879">
    <property type="term" value="F:ligase activity, forming carbon-nitrogen bonds"/>
    <property type="evidence" value="ECO:0007669"/>
    <property type="project" value="UniProtKB-UniRule"/>
</dbReference>
<dbReference type="GO" id="GO:0008270">
    <property type="term" value="F:zinc ion binding"/>
    <property type="evidence" value="ECO:0007669"/>
    <property type="project" value="UniProtKB-UniRule"/>
</dbReference>
<dbReference type="GO" id="GO:0008616">
    <property type="term" value="P:queuosine biosynthetic process"/>
    <property type="evidence" value="ECO:0007669"/>
    <property type="project" value="UniProtKB-UniRule"/>
</dbReference>
<dbReference type="CDD" id="cd01995">
    <property type="entry name" value="QueC-like"/>
    <property type="match status" value="1"/>
</dbReference>
<dbReference type="Gene3D" id="3.40.50.620">
    <property type="entry name" value="HUPs"/>
    <property type="match status" value="1"/>
</dbReference>
<dbReference type="HAMAP" id="MF_01633">
    <property type="entry name" value="QueC"/>
    <property type="match status" value="1"/>
</dbReference>
<dbReference type="InterPro" id="IPR018317">
    <property type="entry name" value="QueC"/>
</dbReference>
<dbReference type="InterPro" id="IPR014729">
    <property type="entry name" value="Rossmann-like_a/b/a_fold"/>
</dbReference>
<dbReference type="NCBIfam" id="TIGR00364">
    <property type="entry name" value="7-cyano-7-deazaguanine synthase QueC"/>
    <property type="match status" value="1"/>
</dbReference>
<dbReference type="PANTHER" id="PTHR42914">
    <property type="entry name" value="7-CYANO-7-DEAZAGUANINE SYNTHASE"/>
    <property type="match status" value="1"/>
</dbReference>
<dbReference type="PANTHER" id="PTHR42914:SF1">
    <property type="entry name" value="7-CYANO-7-DEAZAGUANINE SYNTHASE"/>
    <property type="match status" value="1"/>
</dbReference>
<dbReference type="Pfam" id="PF06508">
    <property type="entry name" value="QueC"/>
    <property type="match status" value="1"/>
</dbReference>
<dbReference type="PIRSF" id="PIRSF006293">
    <property type="entry name" value="ExsB"/>
    <property type="match status" value="1"/>
</dbReference>
<dbReference type="SUPFAM" id="SSF52402">
    <property type="entry name" value="Adenine nucleotide alpha hydrolases-like"/>
    <property type="match status" value="1"/>
</dbReference>
<reference key="1">
    <citation type="journal article" date="2004" name="Nucleic Acids Res.">
        <title>Unique features revealed by the genome sequence of Acinetobacter sp. ADP1, a versatile and naturally transformation competent bacterium.</title>
        <authorList>
            <person name="Barbe V."/>
            <person name="Vallenet D."/>
            <person name="Fonknechten N."/>
            <person name="Kreimeyer A."/>
            <person name="Oztas S."/>
            <person name="Labarre L."/>
            <person name="Cruveiller S."/>
            <person name="Robert C."/>
            <person name="Duprat S."/>
            <person name="Wincker P."/>
            <person name="Ornston L.N."/>
            <person name="Weissenbach J."/>
            <person name="Marliere P."/>
            <person name="Cohen G.N."/>
            <person name="Medigue C."/>
        </authorList>
    </citation>
    <scope>NUCLEOTIDE SEQUENCE [LARGE SCALE GENOMIC DNA]</scope>
    <source>
        <strain>ATCC 33305 / BD413 / ADP1</strain>
    </source>
</reference>
<accession>Q6F9A3</accession>
<protein>
    <recommendedName>
        <fullName evidence="1">7-cyano-7-deazaguanine synthase</fullName>
        <ecNumber evidence="1">6.3.4.20</ecNumber>
    </recommendedName>
    <alternativeName>
        <fullName evidence="1">7-cyano-7-carbaguanine synthase</fullName>
    </alternativeName>
    <alternativeName>
        <fullName evidence="1">PreQ(0) synthase</fullName>
    </alternativeName>
    <alternativeName>
        <fullName evidence="1">Queuosine biosynthesis protein QueC</fullName>
    </alternativeName>
</protein>
<comment type="function">
    <text evidence="1">Catalyzes the ATP-dependent conversion of 7-carboxy-7-deazaguanine (CDG) to 7-cyano-7-deazaguanine (preQ(0)).</text>
</comment>
<comment type="catalytic activity">
    <reaction evidence="1">
        <text>7-carboxy-7-deazaguanine + NH4(+) + ATP = 7-cyano-7-deazaguanine + ADP + phosphate + H2O + H(+)</text>
        <dbReference type="Rhea" id="RHEA:27982"/>
        <dbReference type="ChEBI" id="CHEBI:15377"/>
        <dbReference type="ChEBI" id="CHEBI:15378"/>
        <dbReference type="ChEBI" id="CHEBI:28938"/>
        <dbReference type="ChEBI" id="CHEBI:30616"/>
        <dbReference type="ChEBI" id="CHEBI:43474"/>
        <dbReference type="ChEBI" id="CHEBI:45075"/>
        <dbReference type="ChEBI" id="CHEBI:61036"/>
        <dbReference type="ChEBI" id="CHEBI:456216"/>
        <dbReference type="EC" id="6.3.4.20"/>
    </reaction>
</comment>
<comment type="cofactor">
    <cofactor evidence="1">
        <name>Zn(2+)</name>
        <dbReference type="ChEBI" id="CHEBI:29105"/>
    </cofactor>
    <text evidence="1">Binds 1 zinc ion per subunit.</text>
</comment>
<comment type="pathway">
    <text evidence="1">Purine metabolism; 7-cyano-7-deazaguanine biosynthesis.</text>
</comment>
<comment type="similarity">
    <text evidence="1">Belongs to the QueC family.</text>
</comment>